<protein>
    <recommendedName>
        <fullName evidence="1">2-isopropylmalate synthase</fullName>
        <ecNumber evidence="1">2.3.3.13</ecNumber>
    </recommendedName>
    <alternativeName>
        <fullName evidence="1">Alpha-IPM synthase</fullName>
    </alternativeName>
    <alternativeName>
        <fullName evidence="1">Alpha-isopropylmalate synthase</fullName>
    </alternativeName>
</protein>
<sequence>MSDQVIIFDTTLRDGEQALSASLTVKEKLQIAFALERLGVDVIEAGFPISSPGDFESVRTIAKHIKNSRICALSRAVTKDIDVAADALKVAEAFRIHTFISTSTVHVQDKLRRSYDDVVEMGVKAVQRARKYTDDVEFSCEDAGRTPIDNLCRMVEAAINAGANTINIPDTVGYTIPGEFGGIIQTLFNRVPNIDKAIISVHCHDDLGMSVANSIAAVQAGARQVEGTINGIGERAGNCSLEEIAMILQTRSEYLGVHTSLKNDEIHRTSKLVSQLCNMPIQSNKAIVGANAFSHSSGIHQDGMLKNKNTYEIMTPESIGLKNKALNLTSRSGRAAVKSHMDSMGYKAEEYNLDTLYADFVKLADRKGQVFDYDLEALMHFANLRDEDDFYKLNYLSVQSGSVMATTSIKLLCGDEEKCEAAVGNGPVDALYQCIYKLTGYEIVLDKFDLTAKGEGEDGLGQADIIANYKGRKYHGTGLATDIIEASGQALLHVINSIHRADQIAEIKQNKITTV</sequence>
<feature type="chain" id="PRO_1000149120" description="2-isopropylmalate synthase">
    <location>
        <begin position="1"/>
        <end position="515"/>
    </location>
</feature>
<feature type="domain" description="Pyruvate carboxyltransferase" evidence="1">
    <location>
        <begin position="5"/>
        <end position="267"/>
    </location>
</feature>
<feature type="region of interest" description="Regulatory domain" evidence="1">
    <location>
        <begin position="392"/>
        <end position="515"/>
    </location>
</feature>
<feature type="binding site" evidence="1">
    <location>
        <position position="14"/>
    </location>
    <ligand>
        <name>Mn(2+)</name>
        <dbReference type="ChEBI" id="CHEBI:29035"/>
    </ligand>
</feature>
<feature type="binding site" evidence="1">
    <location>
        <position position="202"/>
    </location>
    <ligand>
        <name>Mn(2+)</name>
        <dbReference type="ChEBI" id="CHEBI:29035"/>
    </ligand>
</feature>
<feature type="binding site" evidence="1">
    <location>
        <position position="204"/>
    </location>
    <ligand>
        <name>Mn(2+)</name>
        <dbReference type="ChEBI" id="CHEBI:29035"/>
    </ligand>
</feature>
<feature type="binding site" evidence="1">
    <location>
        <position position="238"/>
    </location>
    <ligand>
        <name>Mn(2+)</name>
        <dbReference type="ChEBI" id="CHEBI:29035"/>
    </ligand>
</feature>
<comment type="function">
    <text evidence="1">Catalyzes the condensation of the acetyl group of acetyl-CoA with 3-methyl-2-oxobutanoate (2-ketoisovalerate) to form 3-carboxy-3-hydroxy-4-methylpentanoate (2-isopropylmalate).</text>
</comment>
<comment type="catalytic activity">
    <reaction evidence="1">
        <text>3-methyl-2-oxobutanoate + acetyl-CoA + H2O = (2S)-2-isopropylmalate + CoA + H(+)</text>
        <dbReference type="Rhea" id="RHEA:21524"/>
        <dbReference type="ChEBI" id="CHEBI:1178"/>
        <dbReference type="ChEBI" id="CHEBI:11851"/>
        <dbReference type="ChEBI" id="CHEBI:15377"/>
        <dbReference type="ChEBI" id="CHEBI:15378"/>
        <dbReference type="ChEBI" id="CHEBI:57287"/>
        <dbReference type="ChEBI" id="CHEBI:57288"/>
        <dbReference type="EC" id="2.3.3.13"/>
    </reaction>
</comment>
<comment type="cofactor">
    <cofactor evidence="1">
        <name>Mn(2+)</name>
        <dbReference type="ChEBI" id="CHEBI:29035"/>
    </cofactor>
</comment>
<comment type="pathway">
    <text evidence="1">Amino-acid biosynthesis; L-leucine biosynthesis; L-leucine from 3-methyl-2-oxobutanoate: step 1/4.</text>
</comment>
<comment type="subunit">
    <text evidence="1">Homodimer.</text>
</comment>
<comment type="subcellular location">
    <subcellularLocation>
        <location evidence="1">Cytoplasm</location>
    </subcellularLocation>
</comment>
<comment type="similarity">
    <text evidence="1">Belongs to the alpha-IPM synthase/homocitrate synthase family. LeuA type 1 subfamily.</text>
</comment>
<evidence type="ECO:0000255" key="1">
    <source>
        <dbReference type="HAMAP-Rule" id="MF_01025"/>
    </source>
</evidence>
<organism>
    <name type="scientific">Aliivibrio salmonicida (strain LFI1238)</name>
    <name type="common">Vibrio salmonicida (strain LFI1238)</name>
    <dbReference type="NCBI Taxonomy" id="316275"/>
    <lineage>
        <taxon>Bacteria</taxon>
        <taxon>Pseudomonadati</taxon>
        <taxon>Pseudomonadota</taxon>
        <taxon>Gammaproteobacteria</taxon>
        <taxon>Vibrionales</taxon>
        <taxon>Vibrionaceae</taxon>
        <taxon>Aliivibrio</taxon>
    </lineage>
</organism>
<accession>B6ELK0</accession>
<reference key="1">
    <citation type="journal article" date="2008" name="BMC Genomics">
        <title>The genome sequence of the fish pathogen Aliivibrio salmonicida strain LFI1238 shows extensive evidence of gene decay.</title>
        <authorList>
            <person name="Hjerde E."/>
            <person name="Lorentzen M.S."/>
            <person name="Holden M.T."/>
            <person name="Seeger K."/>
            <person name="Paulsen S."/>
            <person name="Bason N."/>
            <person name="Churcher C."/>
            <person name="Harris D."/>
            <person name="Norbertczak H."/>
            <person name="Quail M.A."/>
            <person name="Sanders S."/>
            <person name="Thurston S."/>
            <person name="Parkhill J."/>
            <person name="Willassen N.P."/>
            <person name="Thomson N.R."/>
        </authorList>
    </citation>
    <scope>NUCLEOTIDE SEQUENCE [LARGE SCALE GENOMIC DNA]</scope>
    <source>
        <strain>LFI1238</strain>
    </source>
</reference>
<dbReference type="EC" id="2.3.3.13" evidence="1"/>
<dbReference type="EMBL" id="FM178379">
    <property type="protein sequence ID" value="CAQ78062.1"/>
    <property type="molecule type" value="Genomic_DNA"/>
</dbReference>
<dbReference type="RefSeq" id="WP_012549204.1">
    <property type="nucleotide sequence ID" value="NC_011312.1"/>
</dbReference>
<dbReference type="SMR" id="B6ELK0"/>
<dbReference type="KEGG" id="vsa:VSAL_I0377"/>
<dbReference type="eggNOG" id="COG0119">
    <property type="taxonomic scope" value="Bacteria"/>
</dbReference>
<dbReference type="HOGENOM" id="CLU_022158_0_1_6"/>
<dbReference type="UniPathway" id="UPA00048">
    <property type="reaction ID" value="UER00070"/>
</dbReference>
<dbReference type="Proteomes" id="UP000001730">
    <property type="component" value="Chromosome 1"/>
</dbReference>
<dbReference type="GO" id="GO:0005829">
    <property type="term" value="C:cytosol"/>
    <property type="evidence" value="ECO:0007669"/>
    <property type="project" value="TreeGrafter"/>
</dbReference>
<dbReference type="GO" id="GO:0003852">
    <property type="term" value="F:2-isopropylmalate synthase activity"/>
    <property type="evidence" value="ECO:0007669"/>
    <property type="project" value="UniProtKB-UniRule"/>
</dbReference>
<dbReference type="GO" id="GO:0003985">
    <property type="term" value="F:acetyl-CoA C-acetyltransferase activity"/>
    <property type="evidence" value="ECO:0007669"/>
    <property type="project" value="UniProtKB-UniRule"/>
</dbReference>
<dbReference type="GO" id="GO:0030145">
    <property type="term" value="F:manganese ion binding"/>
    <property type="evidence" value="ECO:0007669"/>
    <property type="project" value="UniProtKB-UniRule"/>
</dbReference>
<dbReference type="GO" id="GO:0009098">
    <property type="term" value="P:L-leucine biosynthetic process"/>
    <property type="evidence" value="ECO:0007669"/>
    <property type="project" value="UniProtKB-UniRule"/>
</dbReference>
<dbReference type="CDD" id="cd07940">
    <property type="entry name" value="DRE_TIM_IPMS"/>
    <property type="match status" value="1"/>
</dbReference>
<dbReference type="FunFam" id="1.10.238.260:FF:000001">
    <property type="entry name" value="2-isopropylmalate synthase"/>
    <property type="match status" value="1"/>
</dbReference>
<dbReference type="FunFam" id="3.20.20.70:FF:000010">
    <property type="entry name" value="2-isopropylmalate synthase"/>
    <property type="match status" value="1"/>
</dbReference>
<dbReference type="FunFam" id="3.30.160.270:FF:000001">
    <property type="entry name" value="2-isopropylmalate synthase"/>
    <property type="match status" value="1"/>
</dbReference>
<dbReference type="Gene3D" id="1.10.238.260">
    <property type="match status" value="1"/>
</dbReference>
<dbReference type="Gene3D" id="3.30.160.270">
    <property type="match status" value="1"/>
</dbReference>
<dbReference type="Gene3D" id="3.20.20.70">
    <property type="entry name" value="Aldolase class I"/>
    <property type="match status" value="1"/>
</dbReference>
<dbReference type="HAMAP" id="MF_01025">
    <property type="entry name" value="LeuA_type1"/>
    <property type="match status" value="1"/>
</dbReference>
<dbReference type="InterPro" id="IPR050073">
    <property type="entry name" value="2-IPM_HCS-like"/>
</dbReference>
<dbReference type="InterPro" id="IPR013709">
    <property type="entry name" value="2-isopropylmalate_synth_dimer"/>
</dbReference>
<dbReference type="InterPro" id="IPR002034">
    <property type="entry name" value="AIPM/Hcit_synth_CS"/>
</dbReference>
<dbReference type="InterPro" id="IPR013785">
    <property type="entry name" value="Aldolase_TIM"/>
</dbReference>
<dbReference type="InterPro" id="IPR054691">
    <property type="entry name" value="LeuA/HCS_post-cat"/>
</dbReference>
<dbReference type="InterPro" id="IPR036230">
    <property type="entry name" value="LeuA_allosteric_dom_sf"/>
</dbReference>
<dbReference type="InterPro" id="IPR005671">
    <property type="entry name" value="LeuA_bact_synth"/>
</dbReference>
<dbReference type="InterPro" id="IPR000891">
    <property type="entry name" value="PYR_CT"/>
</dbReference>
<dbReference type="NCBIfam" id="TIGR00973">
    <property type="entry name" value="leuA_bact"/>
    <property type="match status" value="1"/>
</dbReference>
<dbReference type="NCBIfam" id="NF002084">
    <property type="entry name" value="PRK00915.1-1"/>
    <property type="match status" value="1"/>
</dbReference>
<dbReference type="NCBIfam" id="NF002086">
    <property type="entry name" value="PRK00915.1-3"/>
    <property type="match status" value="1"/>
</dbReference>
<dbReference type="PANTHER" id="PTHR10277:SF9">
    <property type="entry name" value="2-ISOPROPYLMALATE SYNTHASE 1, CHLOROPLASTIC-RELATED"/>
    <property type="match status" value="1"/>
</dbReference>
<dbReference type="PANTHER" id="PTHR10277">
    <property type="entry name" value="HOMOCITRATE SYNTHASE-RELATED"/>
    <property type="match status" value="1"/>
</dbReference>
<dbReference type="Pfam" id="PF22617">
    <property type="entry name" value="HCS_D2"/>
    <property type="match status" value="1"/>
</dbReference>
<dbReference type="Pfam" id="PF00682">
    <property type="entry name" value="HMGL-like"/>
    <property type="match status" value="1"/>
</dbReference>
<dbReference type="Pfam" id="PF08502">
    <property type="entry name" value="LeuA_dimer"/>
    <property type="match status" value="1"/>
</dbReference>
<dbReference type="SMART" id="SM00917">
    <property type="entry name" value="LeuA_dimer"/>
    <property type="match status" value="1"/>
</dbReference>
<dbReference type="SUPFAM" id="SSF110921">
    <property type="entry name" value="2-isopropylmalate synthase LeuA, allosteric (dimerisation) domain"/>
    <property type="match status" value="1"/>
</dbReference>
<dbReference type="SUPFAM" id="SSF51569">
    <property type="entry name" value="Aldolase"/>
    <property type="match status" value="1"/>
</dbReference>
<dbReference type="PROSITE" id="PS00815">
    <property type="entry name" value="AIPM_HOMOCIT_SYNTH_1"/>
    <property type="match status" value="1"/>
</dbReference>
<dbReference type="PROSITE" id="PS00816">
    <property type="entry name" value="AIPM_HOMOCIT_SYNTH_2"/>
    <property type="match status" value="1"/>
</dbReference>
<dbReference type="PROSITE" id="PS50991">
    <property type="entry name" value="PYR_CT"/>
    <property type="match status" value="1"/>
</dbReference>
<gene>
    <name evidence="1" type="primary">leuA</name>
    <name type="ordered locus">VSAL_I0377</name>
</gene>
<keyword id="KW-0028">Amino-acid biosynthesis</keyword>
<keyword id="KW-0100">Branched-chain amino acid biosynthesis</keyword>
<keyword id="KW-0963">Cytoplasm</keyword>
<keyword id="KW-0432">Leucine biosynthesis</keyword>
<keyword id="KW-0464">Manganese</keyword>
<keyword id="KW-0479">Metal-binding</keyword>
<keyword id="KW-0808">Transferase</keyword>
<name>LEU1_ALISL</name>
<proteinExistence type="inferred from homology"/>